<keyword id="KW-1003">Cell membrane</keyword>
<keyword id="KW-0285">Flavoprotein</keyword>
<keyword id="KW-0288">FMN</keyword>
<keyword id="KW-0472">Membrane</keyword>
<keyword id="KW-0560">Oxidoreductase</keyword>
<keyword id="KW-0665">Pyrimidine biosynthesis</keyword>
<keyword id="KW-1185">Reference proteome</keyword>
<proteinExistence type="inferred from homology"/>
<reference key="1">
    <citation type="journal article" date="2005" name="Nucleic Acids Res.">
        <title>Genome dynamics and diversity of Shigella species, the etiologic agents of bacillary dysentery.</title>
        <authorList>
            <person name="Yang F."/>
            <person name="Yang J."/>
            <person name="Zhang X."/>
            <person name="Chen L."/>
            <person name="Jiang Y."/>
            <person name="Yan Y."/>
            <person name="Tang X."/>
            <person name="Wang J."/>
            <person name="Xiong Z."/>
            <person name="Dong J."/>
            <person name="Xue Y."/>
            <person name="Zhu Y."/>
            <person name="Xu X."/>
            <person name="Sun L."/>
            <person name="Chen S."/>
            <person name="Nie H."/>
            <person name="Peng J."/>
            <person name="Xu J."/>
            <person name="Wang Y."/>
            <person name="Yuan Z."/>
            <person name="Wen Y."/>
            <person name="Yao Z."/>
            <person name="Shen Y."/>
            <person name="Qiang B."/>
            <person name="Hou Y."/>
            <person name="Yu J."/>
            <person name="Jin Q."/>
        </authorList>
    </citation>
    <scope>NUCLEOTIDE SEQUENCE [LARGE SCALE GENOMIC DNA]</scope>
    <source>
        <strain>Sd197</strain>
    </source>
</reference>
<gene>
    <name evidence="1" type="primary">pyrD</name>
    <name type="ordered locus">SDY_0918</name>
</gene>
<comment type="function">
    <text evidence="1">Catalyzes the conversion of dihydroorotate to orotate with quinone as electron acceptor.</text>
</comment>
<comment type="catalytic activity">
    <reaction evidence="1">
        <text>(S)-dihydroorotate + a quinone = orotate + a quinol</text>
        <dbReference type="Rhea" id="RHEA:30187"/>
        <dbReference type="ChEBI" id="CHEBI:24646"/>
        <dbReference type="ChEBI" id="CHEBI:30839"/>
        <dbReference type="ChEBI" id="CHEBI:30864"/>
        <dbReference type="ChEBI" id="CHEBI:132124"/>
        <dbReference type="EC" id="1.3.5.2"/>
    </reaction>
</comment>
<comment type="cofactor">
    <cofactor evidence="1">
        <name>FMN</name>
        <dbReference type="ChEBI" id="CHEBI:58210"/>
    </cofactor>
    <text evidence="1">Binds 1 FMN per subunit.</text>
</comment>
<comment type="pathway">
    <text evidence="1">Pyrimidine metabolism; UMP biosynthesis via de novo pathway; orotate from (S)-dihydroorotate (quinone route): step 1/1.</text>
</comment>
<comment type="subunit">
    <text evidence="1">Monomer.</text>
</comment>
<comment type="subcellular location">
    <subcellularLocation>
        <location evidence="1">Cell membrane</location>
        <topology evidence="1">Peripheral membrane protein</topology>
    </subcellularLocation>
</comment>
<comment type="similarity">
    <text evidence="1">Belongs to the dihydroorotate dehydrogenase family. Type 2 subfamily.</text>
</comment>
<accession>Q32HW1</accession>
<feature type="chain" id="PRO_1000024231" description="Dihydroorotate dehydrogenase (quinone)">
    <location>
        <begin position="1"/>
        <end position="336"/>
    </location>
</feature>
<feature type="active site" description="Nucleophile" evidence="1">
    <location>
        <position position="175"/>
    </location>
</feature>
<feature type="binding site" evidence="1">
    <location>
        <begin position="62"/>
        <end position="66"/>
    </location>
    <ligand>
        <name>FMN</name>
        <dbReference type="ChEBI" id="CHEBI:58210"/>
    </ligand>
</feature>
<feature type="binding site" evidence="1">
    <location>
        <position position="66"/>
    </location>
    <ligand>
        <name>substrate</name>
    </ligand>
</feature>
<feature type="binding site" evidence="1">
    <location>
        <position position="86"/>
    </location>
    <ligand>
        <name>FMN</name>
        <dbReference type="ChEBI" id="CHEBI:58210"/>
    </ligand>
</feature>
<feature type="binding site" evidence="1">
    <location>
        <begin position="111"/>
        <end position="115"/>
    </location>
    <ligand>
        <name>substrate</name>
    </ligand>
</feature>
<feature type="binding site" evidence="1">
    <location>
        <position position="139"/>
    </location>
    <ligand>
        <name>FMN</name>
        <dbReference type="ChEBI" id="CHEBI:58210"/>
    </ligand>
</feature>
<feature type="binding site" evidence="1">
    <location>
        <position position="172"/>
    </location>
    <ligand>
        <name>FMN</name>
        <dbReference type="ChEBI" id="CHEBI:58210"/>
    </ligand>
</feature>
<feature type="binding site" evidence="1">
    <location>
        <position position="172"/>
    </location>
    <ligand>
        <name>substrate</name>
    </ligand>
</feature>
<feature type="binding site" evidence="1">
    <location>
        <position position="177"/>
    </location>
    <ligand>
        <name>substrate</name>
    </ligand>
</feature>
<feature type="binding site" evidence="1">
    <location>
        <position position="217"/>
    </location>
    <ligand>
        <name>FMN</name>
        <dbReference type="ChEBI" id="CHEBI:58210"/>
    </ligand>
</feature>
<feature type="binding site" evidence="1">
    <location>
        <position position="245"/>
    </location>
    <ligand>
        <name>FMN</name>
        <dbReference type="ChEBI" id="CHEBI:58210"/>
    </ligand>
</feature>
<feature type="binding site" evidence="1">
    <location>
        <begin position="246"/>
        <end position="247"/>
    </location>
    <ligand>
        <name>substrate</name>
    </ligand>
</feature>
<feature type="binding site" evidence="1">
    <location>
        <position position="268"/>
    </location>
    <ligand>
        <name>FMN</name>
        <dbReference type="ChEBI" id="CHEBI:58210"/>
    </ligand>
</feature>
<feature type="binding site" evidence="1">
    <location>
        <position position="297"/>
    </location>
    <ligand>
        <name>FMN</name>
        <dbReference type="ChEBI" id="CHEBI:58210"/>
    </ligand>
</feature>
<feature type="binding site" evidence="1">
    <location>
        <begin position="318"/>
        <end position="319"/>
    </location>
    <ligand>
        <name>FMN</name>
        <dbReference type="ChEBI" id="CHEBI:58210"/>
    </ligand>
</feature>
<name>PYRD_SHIDS</name>
<sequence length="336" mass="36795">MYYPFVRKALFQLDPERAHEFTFQQLRRITGTPFEALVRQKVPAKPVNCMGLTFKNPLGLAAGLDKDGECIDALGAMGFGSIEIGTVTPRPQPGNDKPRLFRLVDAEGLINRMGFNNFGVDNLVENVKKAHYDGVLGINIGKNKDTPVEQGKDDYLICMEKIYAYAGYIAINISSPNTPGLRTLQYGEALDDLLTAIKNKQNDLQAMHHKYVPIAVKIAPDLSEDELIQVADSLVRHNIDGVIATNTTLDRSLVQGMKNCDQTGGLSGRPLQLKSTEIIRRLSLELNGRLPIIGVGGIDSVIAAREKIAAGASLVQIYSGFIFKGPPLIKEIVTHI</sequence>
<protein>
    <recommendedName>
        <fullName evidence="1">Dihydroorotate dehydrogenase (quinone)</fullName>
        <ecNumber evidence="1">1.3.5.2</ecNumber>
    </recommendedName>
    <alternativeName>
        <fullName evidence="1">DHOdehase</fullName>
        <shortName evidence="1">DHOD</shortName>
        <shortName evidence="1">DHODase</shortName>
    </alternativeName>
    <alternativeName>
        <fullName evidence="1">Dihydroorotate oxidase</fullName>
    </alternativeName>
</protein>
<organism>
    <name type="scientific">Shigella dysenteriae serotype 1 (strain Sd197)</name>
    <dbReference type="NCBI Taxonomy" id="300267"/>
    <lineage>
        <taxon>Bacteria</taxon>
        <taxon>Pseudomonadati</taxon>
        <taxon>Pseudomonadota</taxon>
        <taxon>Gammaproteobacteria</taxon>
        <taxon>Enterobacterales</taxon>
        <taxon>Enterobacteriaceae</taxon>
        <taxon>Shigella</taxon>
    </lineage>
</organism>
<evidence type="ECO:0000255" key="1">
    <source>
        <dbReference type="HAMAP-Rule" id="MF_00225"/>
    </source>
</evidence>
<dbReference type="EC" id="1.3.5.2" evidence="1"/>
<dbReference type="EMBL" id="CP000034">
    <property type="protein sequence ID" value="ABB61094.1"/>
    <property type="molecule type" value="Genomic_DNA"/>
</dbReference>
<dbReference type="RefSeq" id="WP_005020284.1">
    <property type="nucleotide sequence ID" value="NC_007606.1"/>
</dbReference>
<dbReference type="RefSeq" id="YP_402585.1">
    <property type="nucleotide sequence ID" value="NC_007606.1"/>
</dbReference>
<dbReference type="SMR" id="Q32HW1"/>
<dbReference type="STRING" id="300267.SDY_0918"/>
<dbReference type="EnsemblBacteria" id="ABB61094">
    <property type="protein sequence ID" value="ABB61094"/>
    <property type="gene ID" value="SDY_0918"/>
</dbReference>
<dbReference type="KEGG" id="sdy:SDY_0918"/>
<dbReference type="PATRIC" id="fig|300267.13.peg.1064"/>
<dbReference type="HOGENOM" id="CLU_013640_2_0_6"/>
<dbReference type="UniPathway" id="UPA00070">
    <property type="reaction ID" value="UER00946"/>
</dbReference>
<dbReference type="Proteomes" id="UP000002716">
    <property type="component" value="Chromosome"/>
</dbReference>
<dbReference type="GO" id="GO:0005737">
    <property type="term" value="C:cytoplasm"/>
    <property type="evidence" value="ECO:0007669"/>
    <property type="project" value="InterPro"/>
</dbReference>
<dbReference type="GO" id="GO:0005886">
    <property type="term" value="C:plasma membrane"/>
    <property type="evidence" value="ECO:0007669"/>
    <property type="project" value="UniProtKB-SubCell"/>
</dbReference>
<dbReference type="GO" id="GO:0106430">
    <property type="term" value="F:dihydroorotate dehydrogenase (quinone) activity"/>
    <property type="evidence" value="ECO:0007669"/>
    <property type="project" value="UniProtKB-EC"/>
</dbReference>
<dbReference type="GO" id="GO:0006207">
    <property type="term" value="P:'de novo' pyrimidine nucleobase biosynthetic process"/>
    <property type="evidence" value="ECO:0007669"/>
    <property type="project" value="InterPro"/>
</dbReference>
<dbReference type="GO" id="GO:0044205">
    <property type="term" value="P:'de novo' UMP biosynthetic process"/>
    <property type="evidence" value="ECO:0007669"/>
    <property type="project" value="UniProtKB-UniRule"/>
</dbReference>
<dbReference type="CDD" id="cd04738">
    <property type="entry name" value="DHOD_2_like"/>
    <property type="match status" value="1"/>
</dbReference>
<dbReference type="FunFam" id="3.20.20.70:FF:000028">
    <property type="entry name" value="Dihydroorotate dehydrogenase (quinone)"/>
    <property type="match status" value="1"/>
</dbReference>
<dbReference type="Gene3D" id="3.20.20.70">
    <property type="entry name" value="Aldolase class I"/>
    <property type="match status" value="1"/>
</dbReference>
<dbReference type="HAMAP" id="MF_00225">
    <property type="entry name" value="DHO_dh_type2"/>
    <property type="match status" value="1"/>
</dbReference>
<dbReference type="InterPro" id="IPR013785">
    <property type="entry name" value="Aldolase_TIM"/>
</dbReference>
<dbReference type="InterPro" id="IPR050074">
    <property type="entry name" value="DHO_dehydrogenase"/>
</dbReference>
<dbReference type="InterPro" id="IPR012135">
    <property type="entry name" value="Dihydroorotate_DH_1_2"/>
</dbReference>
<dbReference type="InterPro" id="IPR005719">
    <property type="entry name" value="Dihydroorotate_DH_2"/>
</dbReference>
<dbReference type="InterPro" id="IPR005720">
    <property type="entry name" value="Dihydroorotate_DH_cat"/>
</dbReference>
<dbReference type="InterPro" id="IPR001295">
    <property type="entry name" value="Dihydroorotate_DH_CS"/>
</dbReference>
<dbReference type="NCBIfam" id="NF003644">
    <property type="entry name" value="PRK05286.1-1"/>
    <property type="match status" value="1"/>
</dbReference>
<dbReference type="NCBIfam" id="NF003645">
    <property type="entry name" value="PRK05286.1-2"/>
    <property type="match status" value="1"/>
</dbReference>
<dbReference type="NCBIfam" id="NF003646">
    <property type="entry name" value="PRK05286.1-4"/>
    <property type="match status" value="1"/>
</dbReference>
<dbReference type="NCBIfam" id="NF003652">
    <property type="entry name" value="PRK05286.2-5"/>
    <property type="match status" value="1"/>
</dbReference>
<dbReference type="NCBIfam" id="TIGR01036">
    <property type="entry name" value="pyrD_sub2"/>
    <property type="match status" value="1"/>
</dbReference>
<dbReference type="PANTHER" id="PTHR48109:SF4">
    <property type="entry name" value="DIHYDROOROTATE DEHYDROGENASE (QUINONE), MITOCHONDRIAL"/>
    <property type="match status" value="1"/>
</dbReference>
<dbReference type="PANTHER" id="PTHR48109">
    <property type="entry name" value="DIHYDROOROTATE DEHYDROGENASE (QUINONE), MITOCHONDRIAL-RELATED"/>
    <property type="match status" value="1"/>
</dbReference>
<dbReference type="Pfam" id="PF01180">
    <property type="entry name" value="DHO_dh"/>
    <property type="match status" value="1"/>
</dbReference>
<dbReference type="PIRSF" id="PIRSF000164">
    <property type="entry name" value="DHO_oxidase"/>
    <property type="match status" value="1"/>
</dbReference>
<dbReference type="SUPFAM" id="SSF51395">
    <property type="entry name" value="FMN-linked oxidoreductases"/>
    <property type="match status" value="1"/>
</dbReference>
<dbReference type="PROSITE" id="PS00911">
    <property type="entry name" value="DHODEHASE_1"/>
    <property type="match status" value="1"/>
</dbReference>
<dbReference type="PROSITE" id="PS00912">
    <property type="entry name" value="DHODEHASE_2"/>
    <property type="match status" value="1"/>
</dbReference>